<evidence type="ECO:0000250" key="1">
    <source>
        <dbReference type="UniProtKB" id="P0AAI5"/>
    </source>
</evidence>
<evidence type="ECO:0000255" key="2">
    <source>
        <dbReference type="PROSITE-ProRule" id="PRU01348"/>
    </source>
</evidence>
<evidence type="ECO:0000305" key="3"/>
<accession>Q6GIA3</accession>
<dbReference type="EC" id="2.3.1.179" evidence="1"/>
<dbReference type="EMBL" id="BX571856">
    <property type="protein sequence ID" value="CAG39953.1"/>
    <property type="molecule type" value="Genomic_DNA"/>
</dbReference>
<dbReference type="RefSeq" id="WP_000081181.1">
    <property type="nucleotide sequence ID" value="NC_002952.2"/>
</dbReference>
<dbReference type="SMR" id="Q6GIA3"/>
<dbReference type="KEGG" id="sar:SAR0947"/>
<dbReference type="HOGENOM" id="CLU_000022_69_2_9"/>
<dbReference type="UniPathway" id="UPA00094"/>
<dbReference type="Proteomes" id="UP000000596">
    <property type="component" value="Chromosome"/>
</dbReference>
<dbReference type="GO" id="GO:0005829">
    <property type="term" value="C:cytosol"/>
    <property type="evidence" value="ECO:0007669"/>
    <property type="project" value="TreeGrafter"/>
</dbReference>
<dbReference type="GO" id="GO:0004315">
    <property type="term" value="F:3-oxoacyl-[acyl-carrier-protein] synthase activity"/>
    <property type="evidence" value="ECO:0007669"/>
    <property type="project" value="UniProtKB-EC"/>
</dbReference>
<dbReference type="GO" id="GO:0006633">
    <property type="term" value="P:fatty acid biosynthetic process"/>
    <property type="evidence" value="ECO:0007669"/>
    <property type="project" value="UniProtKB-UniPathway"/>
</dbReference>
<dbReference type="CDD" id="cd00834">
    <property type="entry name" value="KAS_I_II"/>
    <property type="match status" value="1"/>
</dbReference>
<dbReference type="FunFam" id="3.40.47.10:FF:000026">
    <property type="entry name" value="3-oxoacyl-[acyl-carrier-protein] synthase 2"/>
    <property type="match status" value="1"/>
</dbReference>
<dbReference type="Gene3D" id="3.40.47.10">
    <property type="match status" value="2"/>
</dbReference>
<dbReference type="InterPro" id="IPR017568">
    <property type="entry name" value="3-oxoacyl-ACP_synth-2"/>
</dbReference>
<dbReference type="InterPro" id="IPR000794">
    <property type="entry name" value="Beta-ketoacyl_synthase"/>
</dbReference>
<dbReference type="InterPro" id="IPR018201">
    <property type="entry name" value="Ketoacyl_synth_AS"/>
</dbReference>
<dbReference type="InterPro" id="IPR014031">
    <property type="entry name" value="Ketoacyl_synth_C"/>
</dbReference>
<dbReference type="InterPro" id="IPR014030">
    <property type="entry name" value="Ketoacyl_synth_N"/>
</dbReference>
<dbReference type="InterPro" id="IPR020841">
    <property type="entry name" value="PKS_Beta-ketoAc_synthase_dom"/>
</dbReference>
<dbReference type="InterPro" id="IPR016039">
    <property type="entry name" value="Thiolase-like"/>
</dbReference>
<dbReference type="NCBIfam" id="TIGR03150">
    <property type="entry name" value="fabF"/>
    <property type="match status" value="1"/>
</dbReference>
<dbReference type="NCBIfam" id="NF004970">
    <property type="entry name" value="PRK06333.1"/>
    <property type="match status" value="1"/>
</dbReference>
<dbReference type="NCBIfam" id="NF005589">
    <property type="entry name" value="PRK07314.1"/>
    <property type="match status" value="1"/>
</dbReference>
<dbReference type="PANTHER" id="PTHR11712:SF336">
    <property type="entry name" value="3-OXOACYL-[ACYL-CARRIER-PROTEIN] SYNTHASE, MITOCHONDRIAL"/>
    <property type="match status" value="1"/>
</dbReference>
<dbReference type="PANTHER" id="PTHR11712">
    <property type="entry name" value="POLYKETIDE SYNTHASE-RELATED"/>
    <property type="match status" value="1"/>
</dbReference>
<dbReference type="Pfam" id="PF00109">
    <property type="entry name" value="ketoacyl-synt"/>
    <property type="match status" value="1"/>
</dbReference>
<dbReference type="Pfam" id="PF02801">
    <property type="entry name" value="Ketoacyl-synt_C"/>
    <property type="match status" value="1"/>
</dbReference>
<dbReference type="PIRSF" id="PIRSF000447">
    <property type="entry name" value="KAS_II"/>
    <property type="match status" value="1"/>
</dbReference>
<dbReference type="SMART" id="SM00825">
    <property type="entry name" value="PKS_KS"/>
    <property type="match status" value="1"/>
</dbReference>
<dbReference type="SUPFAM" id="SSF53901">
    <property type="entry name" value="Thiolase-like"/>
    <property type="match status" value="2"/>
</dbReference>
<dbReference type="PROSITE" id="PS00606">
    <property type="entry name" value="KS3_1"/>
    <property type="match status" value="1"/>
</dbReference>
<dbReference type="PROSITE" id="PS52004">
    <property type="entry name" value="KS3_2"/>
    <property type="match status" value="1"/>
</dbReference>
<gene>
    <name type="primary">fabF</name>
    <name type="ordered locus">SAR0947</name>
</gene>
<proteinExistence type="inferred from homology"/>
<comment type="function">
    <text evidence="1">Involved in the type II fatty acid elongation cycle. Catalyzes the elongation of a wide range of acyl-ACP by the addition of two carbons from malonyl-ACP to an acyl acceptor. Can efficiently catalyze the conversion of palmitoleoyl-ACP (cis-hexadec-9-enoyl-ACP) to cis-vaccenoyl-ACP (cis-octadec-11-enoyl-ACP), an essential step in the thermal regulation of fatty acid composition.</text>
</comment>
<comment type="catalytic activity">
    <reaction evidence="1">
        <text>a fatty acyl-[ACP] + malonyl-[ACP] + H(+) = a 3-oxoacyl-[ACP] + holo-[ACP] + CO2</text>
        <dbReference type="Rhea" id="RHEA:22836"/>
        <dbReference type="Rhea" id="RHEA-COMP:9623"/>
        <dbReference type="Rhea" id="RHEA-COMP:9685"/>
        <dbReference type="Rhea" id="RHEA-COMP:9916"/>
        <dbReference type="Rhea" id="RHEA-COMP:14125"/>
        <dbReference type="ChEBI" id="CHEBI:15378"/>
        <dbReference type="ChEBI" id="CHEBI:16526"/>
        <dbReference type="ChEBI" id="CHEBI:64479"/>
        <dbReference type="ChEBI" id="CHEBI:78449"/>
        <dbReference type="ChEBI" id="CHEBI:78776"/>
        <dbReference type="ChEBI" id="CHEBI:138651"/>
    </reaction>
</comment>
<comment type="catalytic activity">
    <reaction evidence="1">
        <text>(9Z)-hexadecenoyl-[ACP] + malonyl-[ACP] + H(+) = 3-oxo-(11Z)-octadecenoyl-[ACP] + holo-[ACP] + CO2</text>
        <dbReference type="Rhea" id="RHEA:55040"/>
        <dbReference type="Rhea" id="RHEA-COMP:9623"/>
        <dbReference type="Rhea" id="RHEA-COMP:9685"/>
        <dbReference type="Rhea" id="RHEA-COMP:10800"/>
        <dbReference type="Rhea" id="RHEA-COMP:14074"/>
        <dbReference type="ChEBI" id="CHEBI:15378"/>
        <dbReference type="ChEBI" id="CHEBI:16526"/>
        <dbReference type="ChEBI" id="CHEBI:64479"/>
        <dbReference type="ChEBI" id="CHEBI:78449"/>
        <dbReference type="ChEBI" id="CHEBI:83989"/>
        <dbReference type="ChEBI" id="CHEBI:138538"/>
        <dbReference type="EC" id="2.3.1.179"/>
    </reaction>
</comment>
<comment type="pathway">
    <text evidence="1">Lipid metabolism; fatty acid biosynthesis.</text>
</comment>
<comment type="similarity">
    <text evidence="3">Belongs to the thiolase-like superfamily. Beta-ketoacyl-ACP synthases family.</text>
</comment>
<feature type="chain" id="PRO_0000180323" description="3-oxoacyl-[acyl-carrier-protein] synthase 2">
    <location>
        <begin position="1"/>
        <end position="414"/>
    </location>
</feature>
<feature type="domain" description="Ketosynthase family 3 (KS3)" evidence="2">
    <location>
        <begin position="4"/>
        <end position="411"/>
    </location>
</feature>
<feature type="active site" description="For beta-ketoacyl synthase activity" evidence="2">
    <location>
        <position position="165"/>
    </location>
</feature>
<feature type="active site" description="For beta-ketoacyl synthase activity" evidence="2">
    <location>
        <position position="304"/>
    </location>
</feature>
<feature type="active site" description="For beta-ketoacyl synthase activity" evidence="2">
    <location>
        <position position="341"/>
    </location>
</feature>
<name>FABF_STAAR</name>
<keyword id="KW-0012">Acyltransferase</keyword>
<keyword id="KW-0275">Fatty acid biosynthesis</keyword>
<keyword id="KW-0276">Fatty acid metabolism</keyword>
<keyword id="KW-0444">Lipid biosynthesis</keyword>
<keyword id="KW-0443">Lipid metabolism</keyword>
<keyword id="KW-0808">Transferase</keyword>
<sequence>MSQNIRVVITGMGALSPIGNDVKTTWENALKGVNGIDKITRIDTEPYSVHLAGELKNFNIEDHIDKKEARRMDRFTQYAIVAAREAVKDAQLDINENTADRIGVWIGSGIGGMETFEIAHKQLMDKGPRRVSPFFVPMLIPDMATGQVSIDLGAKGPNGATVTACATGTNSIGEAFKIVQRGDADAMITGGTEAPITHMAIAGFSASRALSTNDDIETACRPFQEGRDGFVMGEGAGILVIESLESAQARGANIYAEIVGYGTTGDAYHITAPAPEGEGGSRAMQAAMDDAGIEPKDVQYLNAHGTSTPVGDLNEVKAIKNTFGEAAKHLKVSSTKSMTGHLLGATGGIEAIFSALSIKDSKVAPTIHAVTPDPECDLDIVPNEAQDLDITYAMSNSLGFGGHNAVLVFKKFEA</sequence>
<protein>
    <recommendedName>
        <fullName>3-oxoacyl-[acyl-carrier-protein] synthase 2</fullName>
        <ecNumber evidence="1">2.3.1.179</ecNumber>
    </recommendedName>
    <alternativeName>
        <fullName>3-oxoacyl-[acyl-carrier-protein] synthase II</fullName>
    </alternativeName>
    <alternativeName>
        <fullName>Beta-ketoacyl-ACP synthase II</fullName>
        <shortName>KAS II</shortName>
    </alternativeName>
</protein>
<organism>
    <name type="scientific">Staphylococcus aureus (strain MRSA252)</name>
    <dbReference type="NCBI Taxonomy" id="282458"/>
    <lineage>
        <taxon>Bacteria</taxon>
        <taxon>Bacillati</taxon>
        <taxon>Bacillota</taxon>
        <taxon>Bacilli</taxon>
        <taxon>Bacillales</taxon>
        <taxon>Staphylococcaceae</taxon>
        <taxon>Staphylococcus</taxon>
    </lineage>
</organism>
<reference key="1">
    <citation type="journal article" date="2004" name="Proc. Natl. Acad. Sci. U.S.A.">
        <title>Complete genomes of two clinical Staphylococcus aureus strains: evidence for the rapid evolution of virulence and drug resistance.</title>
        <authorList>
            <person name="Holden M.T.G."/>
            <person name="Feil E.J."/>
            <person name="Lindsay J.A."/>
            <person name="Peacock S.J."/>
            <person name="Day N.P.J."/>
            <person name="Enright M.C."/>
            <person name="Foster T.J."/>
            <person name="Moore C.E."/>
            <person name="Hurst L."/>
            <person name="Atkin R."/>
            <person name="Barron A."/>
            <person name="Bason N."/>
            <person name="Bentley S.D."/>
            <person name="Chillingworth C."/>
            <person name="Chillingworth T."/>
            <person name="Churcher C."/>
            <person name="Clark L."/>
            <person name="Corton C."/>
            <person name="Cronin A."/>
            <person name="Doggett J."/>
            <person name="Dowd L."/>
            <person name="Feltwell T."/>
            <person name="Hance Z."/>
            <person name="Harris B."/>
            <person name="Hauser H."/>
            <person name="Holroyd S."/>
            <person name="Jagels K."/>
            <person name="James K.D."/>
            <person name="Lennard N."/>
            <person name="Line A."/>
            <person name="Mayes R."/>
            <person name="Moule S."/>
            <person name="Mungall K."/>
            <person name="Ormond D."/>
            <person name="Quail M.A."/>
            <person name="Rabbinowitsch E."/>
            <person name="Rutherford K.M."/>
            <person name="Sanders M."/>
            <person name="Sharp S."/>
            <person name="Simmonds M."/>
            <person name="Stevens K."/>
            <person name="Whitehead S."/>
            <person name="Barrell B.G."/>
            <person name="Spratt B.G."/>
            <person name="Parkhill J."/>
        </authorList>
    </citation>
    <scope>NUCLEOTIDE SEQUENCE [LARGE SCALE GENOMIC DNA]</scope>
    <source>
        <strain>MRSA252</strain>
    </source>
</reference>